<organism>
    <name type="scientific">Methanothermobacter thermautotrophicus (strain ATCC 29096 / DSM 1053 / JCM 10044 / NBRC 100330 / Delta H)</name>
    <name type="common">Methanobacterium thermoautotrophicum</name>
    <dbReference type="NCBI Taxonomy" id="187420"/>
    <lineage>
        <taxon>Archaea</taxon>
        <taxon>Methanobacteriati</taxon>
        <taxon>Methanobacteriota</taxon>
        <taxon>Methanomada group</taxon>
        <taxon>Methanobacteria</taxon>
        <taxon>Methanobacteriales</taxon>
        <taxon>Methanobacteriaceae</taxon>
        <taxon>Methanothermobacter</taxon>
    </lineage>
</organism>
<keyword id="KW-0030">Aminoacyl-tRNA synthetase</keyword>
<keyword id="KW-0067">ATP-binding</keyword>
<keyword id="KW-0963">Cytoplasm</keyword>
<keyword id="KW-0436">Ligase</keyword>
<keyword id="KW-0460">Magnesium</keyword>
<keyword id="KW-0479">Metal-binding</keyword>
<keyword id="KW-0547">Nucleotide-binding</keyword>
<keyword id="KW-0648">Protein biosynthesis</keyword>
<keyword id="KW-1185">Reference proteome</keyword>
<feature type="chain" id="PRO_0000110999" description="Aspartate--tRNA(Asp/Asn) ligase">
    <location>
        <begin position="1"/>
        <end position="437"/>
    </location>
</feature>
<feature type="region of interest" description="Aspartate" evidence="1">
    <location>
        <begin position="197"/>
        <end position="200"/>
    </location>
</feature>
<feature type="binding site" evidence="1">
    <location>
        <position position="175"/>
    </location>
    <ligand>
        <name>L-aspartate</name>
        <dbReference type="ChEBI" id="CHEBI:29991"/>
    </ligand>
</feature>
<feature type="binding site" evidence="1">
    <location>
        <begin position="219"/>
        <end position="221"/>
    </location>
    <ligand>
        <name>ATP</name>
        <dbReference type="ChEBI" id="CHEBI:30616"/>
    </ligand>
</feature>
<feature type="binding site" evidence="1">
    <location>
        <position position="219"/>
    </location>
    <ligand>
        <name>L-aspartate</name>
        <dbReference type="ChEBI" id="CHEBI:29991"/>
    </ligand>
</feature>
<feature type="binding site" evidence="1">
    <location>
        <begin position="227"/>
        <end position="229"/>
    </location>
    <ligand>
        <name>ATP</name>
        <dbReference type="ChEBI" id="CHEBI:30616"/>
    </ligand>
</feature>
<feature type="binding site" evidence="1">
    <location>
        <position position="360"/>
    </location>
    <ligand>
        <name>ATP</name>
        <dbReference type="ChEBI" id="CHEBI:30616"/>
    </ligand>
</feature>
<feature type="binding site" evidence="1">
    <location>
        <position position="360"/>
    </location>
    <ligand>
        <name>Mg(2+)</name>
        <dbReference type="ChEBI" id="CHEBI:18420"/>
        <label>2</label>
    </ligand>
</feature>
<feature type="binding site" evidence="1">
    <location>
        <position position="360"/>
    </location>
    <ligand>
        <name>Mg(2+)</name>
        <dbReference type="ChEBI" id="CHEBI:18420"/>
        <label>3</label>
    </ligand>
</feature>
<feature type="binding site" evidence="1">
    <location>
        <position position="363"/>
    </location>
    <ligand>
        <name>L-aspartate</name>
        <dbReference type="ChEBI" id="CHEBI:29991"/>
    </ligand>
</feature>
<feature type="binding site" evidence="1">
    <location>
        <position position="363"/>
    </location>
    <ligand>
        <name>Mg(2+)</name>
        <dbReference type="ChEBI" id="CHEBI:18420"/>
        <label>2</label>
    </ligand>
</feature>
<feature type="binding site" evidence="1">
    <location>
        <position position="367"/>
    </location>
    <ligand>
        <name>L-aspartate</name>
        <dbReference type="ChEBI" id="CHEBI:29991"/>
    </ligand>
</feature>
<feature type="binding site" evidence="1">
    <location>
        <begin position="408"/>
        <end position="411"/>
    </location>
    <ligand>
        <name>ATP</name>
        <dbReference type="ChEBI" id="CHEBI:30616"/>
    </ligand>
</feature>
<feature type="site" description="Important for tRNA non-discrimination" evidence="1">
    <location>
        <position position="90"/>
    </location>
</feature>
<evidence type="ECO:0000255" key="1">
    <source>
        <dbReference type="HAMAP-Rule" id="MF_02075"/>
    </source>
</evidence>
<evidence type="ECO:0000269" key="2">
    <source>
    </source>
</evidence>
<proteinExistence type="evidence at protein level"/>
<gene>
    <name evidence="1" type="primary">aspS</name>
    <name type="ordered locus">MTH_226</name>
</gene>
<sequence length="437" mass="49838">MLLGDLRRTHYSKDIEPEMDGDEVTVMGWVHEIRDLGGIIFVLLRDRDGLIQITAPSKKIEKDLFKSIRKLKKESVVAFGGTVQESGKAPGGFEIIPSFLKVLNISKQPLPLDPTEKVKAEIDTRLDARFLDLRKPSVSAIFKIKSRMLHSVRVFLEEQGFLEINTPKLVASATEGGTELFPITYFEREAFLGQSPQLYKQIMMSTGLDRVYEIAPIFRAEEHDTLRHLNEVISIDIEASFVDHEDVMKILENLVVRVIEDVNEHCTDALETLGRTLEVPETPFERLEYDEAVEMVNSKGVPMKHGEDLPRAAEKALGEIMDGYYFITSWPTAIKPFYVMPDEDDPERSHAFDLMYRDLEISSGAMRVHQHDLLVEKIKRQGLNPDSFESYLSAFEYGMPPHAGWGLGAERFNMTLTGLKNIRETVLFPRDRRRLTP</sequence>
<accession>O26328</accession>
<name>SYDND_METTH</name>
<protein>
    <recommendedName>
        <fullName evidence="1">Aspartate--tRNA(Asp/Asn) ligase</fullName>
        <ecNumber evidence="1">6.1.1.23</ecNumber>
    </recommendedName>
    <alternativeName>
        <fullName evidence="1">Aspartyl-tRNA synthetase</fullName>
        <shortName evidence="1">AspRS</shortName>
    </alternativeName>
    <alternativeName>
        <fullName evidence="1">Non-discriminating aspartyl-tRNA synthetase</fullName>
        <shortName evidence="1">ND-AspRS</shortName>
    </alternativeName>
</protein>
<dbReference type="EC" id="6.1.1.23" evidence="1"/>
<dbReference type="EMBL" id="AE000666">
    <property type="protein sequence ID" value="AAB84732.1"/>
    <property type="molecule type" value="Genomic_DNA"/>
</dbReference>
<dbReference type="PIR" id="A69128">
    <property type="entry name" value="A69128"/>
</dbReference>
<dbReference type="RefSeq" id="WP_010875865.1">
    <property type="nucleotide sequence ID" value="NC_000916.1"/>
</dbReference>
<dbReference type="SMR" id="O26328"/>
<dbReference type="FunCoup" id="O26328">
    <property type="interactions" value="235"/>
</dbReference>
<dbReference type="STRING" id="187420.MTH_226"/>
<dbReference type="PaxDb" id="187420-MTH_226"/>
<dbReference type="EnsemblBacteria" id="AAB84732">
    <property type="protein sequence ID" value="AAB84732"/>
    <property type="gene ID" value="MTH_226"/>
</dbReference>
<dbReference type="GeneID" id="82296700"/>
<dbReference type="KEGG" id="mth:MTH_226"/>
<dbReference type="PATRIC" id="fig|187420.15.peg.195"/>
<dbReference type="HOGENOM" id="CLU_004553_2_1_2"/>
<dbReference type="InParanoid" id="O26328"/>
<dbReference type="BRENDA" id="6.1.1.23">
    <property type="organism ID" value="3256"/>
</dbReference>
<dbReference type="Proteomes" id="UP000005223">
    <property type="component" value="Chromosome"/>
</dbReference>
<dbReference type="GO" id="GO:0017101">
    <property type="term" value="C:aminoacyl-tRNA synthetase multienzyme complex"/>
    <property type="evidence" value="ECO:0007669"/>
    <property type="project" value="TreeGrafter"/>
</dbReference>
<dbReference type="GO" id="GO:0005829">
    <property type="term" value="C:cytosol"/>
    <property type="evidence" value="ECO:0007669"/>
    <property type="project" value="TreeGrafter"/>
</dbReference>
<dbReference type="GO" id="GO:0004815">
    <property type="term" value="F:aspartate-tRNA ligase activity"/>
    <property type="evidence" value="ECO:0007669"/>
    <property type="project" value="UniProtKB-UniRule"/>
</dbReference>
<dbReference type="GO" id="GO:0050560">
    <property type="term" value="F:aspartate-tRNA(Asn) ligase activity"/>
    <property type="evidence" value="ECO:0007669"/>
    <property type="project" value="UniProtKB-EC"/>
</dbReference>
<dbReference type="GO" id="GO:0005524">
    <property type="term" value="F:ATP binding"/>
    <property type="evidence" value="ECO:0007669"/>
    <property type="project" value="UniProtKB-UniRule"/>
</dbReference>
<dbReference type="GO" id="GO:0000287">
    <property type="term" value="F:magnesium ion binding"/>
    <property type="evidence" value="ECO:0007669"/>
    <property type="project" value="UniProtKB-UniRule"/>
</dbReference>
<dbReference type="GO" id="GO:0003723">
    <property type="term" value="F:RNA binding"/>
    <property type="evidence" value="ECO:0007669"/>
    <property type="project" value="TreeGrafter"/>
</dbReference>
<dbReference type="GO" id="GO:0006422">
    <property type="term" value="P:aspartyl-tRNA aminoacylation"/>
    <property type="evidence" value="ECO:0007669"/>
    <property type="project" value="UniProtKB-UniRule"/>
</dbReference>
<dbReference type="CDD" id="cd00776">
    <property type="entry name" value="AsxRS_core"/>
    <property type="match status" value="1"/>
</dbReference>
<dbReference type="CDD" id="cd04316">
    <property type="entry name" value="ND_PkAspRS_like_N"/>
    <property type="match status" value="1"/>
</dbReference>
<dbReference type="FunFam" id="3.30.930.10:FF:000038">
    <property type="entry name" value="Aspartate--tRNA ligase"/>
    <property type="match status" value="1"/>
</dbReference>
<dbReference type="FunFam" id="2.40.50.140:FF:000324">
    <property type="entry name" value="Aspartate--tRNA(Asp/Asn) ligase"/>
    <property type="match status" value="1"/>
</dbReference>
<dbReference type="Gene3D" id="3.30.930.10">
    <property type="entry name" value="Bira Bifunctional Protein, Domain 2"/>
    <property type="match status" value="1"/>
</dbReference>
<dbReference type="Gene3D" id="2.40.50.140">
    <property type="entry name" value="Nucleic acid-binding proteins"/>
    <property type="match status" value="1"/>
</dbReference>
<dbReference type="HAMAP" id="MF_02075">
    <property type="entry name" value="Asp_tRNA_synth_type2"/>
    <property type="match status" value="1"/>
</dbReference>
<dbReference type="InterPro" id="IPR004364">
    <property type="entry name" value="Aa-tRNA-synt_II"/>
</dbReference>
<dbReference type="InterPro" id="IPR006195">
    <property type="entry name" value="aa-tRNA-synth_II"/>
</dbReference>
<dbReference type="InterPro" id="IPR045864">
    <property type="entry name" value="aa-tRNA-synth_II/BPL/LPL"/>
</dbReference>
<dbReference type="InterPro" id="IPR004523">
    <property type="entry name" value="Asp-tRNA_synthase_2"/>
</dbReference>
<dbReference type="InterPro" id="IPR002312">
    <property type="entry name" value="Asp/Asn-tRNA-synth_IIb"/>
</dbReference>
<dbReference type="InterPro" id="IPR012340">
    <property type="entry name" value="NA-bd_OB-fold"/>
</dbReference>
<dbReference type="InterPro" id="IPR004365">
    <property type="entry name" value="NA-bd_OB_tRNA"/>
</dbReference>
<dbReference type="NCBIfam" id="TIGR00458">
    <property type="entry name" value="aspS_nondisc"/>
    <property type="match status" value="1"/>
</dbReference>
<dbReference type="NCBIfam" id="NF003483">
    <property type="entry name" value="PRK05159.1"/>
    <property type="match status" value="1"/>
</dbReference>
<dbReference type="PANTHER" id="PTHR43450:SF1">
    <property type="entry name" value="ASPARTATE--TRNA LIGASE, CYTOPLASMIC"/>
    <property type="match status" value="1"/>
</dbReference>
<dbReference type="PANTHER" id="PTHR43450">
    <property type="entry name" value="ASPARTYL-TRNA SYNTHETASE"/>
    <property type="match status" value="1"/>
</dbReference>
<dbReference type="Pfam" id="PF00152">
    <property type="entry name" value="tRNA-synt_2"/>
    <property type="match status" value="1"/>
</dbReference>
<dbReference type="Pfam" id="PF01336">
    <property type="entry name" value="tRNA_anti-codon"/>
    <property type="match status" value="1"/>
</dbReference>
<dbReference type="PRINTS" id="PR01042">
    <property type="entry name" value="TRNASYNTHASP"/>
</dbReference>
<dbReference type="SUPFAM" id="SSF55681">
    <property type="entry name" value="Class II aaRS and biotin synthetases"/>
    <property type="match status" value="1"/>
</dbReference>
<dbReference type="SUPFAM" id="SSF50249">
    <property type="entry name" value="Nucleic acid-binding proteins"/>
    <property type="match status" value="1"/>
</dbReference>
<dbReference type="PROSITE" id="PS50862">
    <property type="entry name" value="AA_TRNA_LIGASE_II"/>
    <property type="match status" value="1"/>
</dbReference>
<comment type="function">
    <text evidence="1 2">Aspartyl-tRNA synthetase with relaxed tRNA specificity since it is able to aspartylate not only its cognate tRNA(Asp) but also tRNA(Asn). Reaction proceeds in two steps: L-aspartate is first activated by ATP to form Asp-AMP and then transferred to the acceptor end of tRNA(Asp/Asn).</text>
</comment>
<comment type="catalytic activity">
    <reaction evidence="1">
        <text>tRNA(Asx) + L-aspartate + ATP = L-aspartyl-tRNA(Asx) + AMP + diphosphate</text>
        <dbReference type="Rhea" id="RHEA:18349"/>
        <dbReference type="Rhea" id="RHEA-COMP:9710"/>
        <dbReference type="Rhea" id="RHEA-COMP:9711"/>
        <dbReference type="ChEBI" id="CHEBI:29991"/>
        <dbReference type="ChEBI" id="CHEBI:30616"/>
        <dbReference type="ChEBI" id="CHEBI:33019"/>
        <dbReference type="ChEBI" id="CHEBI:78442"/>
        <dbReference type="ChEBI" id="CHEBI:78516"/>
        <dbReference type="ChEBI" id="CHEBI:456215"/>
        <dbReference type="EC" id="6.1.1.23"/>
    </reaction>
</comment>
<comment type="cofactor">
    <cofactor evidence="1">
        <name>Mg(2+)</name>
        <dbReference type="ChEBI" id="CHEBI:18420"/>
    </cofactor>
    <text evidence="1">Binds 3 Mg(2+) cations per subunit. The strongest magnesium site (Mg1) is bound to the beta- and gamma-phosphates of ATP and four water molecules complete its coordination sphere.</text>
</comment>
<comment type="subunit">
    <text evidence="1">Homodimer.</text>
</comment>
<comment type="subcellular location">
    <subcellularLocation>
        <location evidence="1">Cytoplasm</location>
    </subcellularLocation>
</comment>
<comment type="similarity">
    <text evidence="1">Belongs to the class-II aminoacyl-tRNA synthetase family. Type 2 subfamily.</text>
</comment>
<reference key="1">
    <citation type="journal article" date="1997" name="J. Bacteriol.">
        <title>Complete genome sequence of Methanobacterium thermoautotrophicum deltaH: functional analysis and comparative genomics.</title>
        <authorList>
            <person name="Smith D.R."/>
            <person name="Doucette-Stamm L.A."/>
            <person name="Deloughery C."/>
            <person name="Lee H.-M."/>
            <person name="Dubois J."/>
            <person name="Aldredge T."/>
            <person name="Bashirzadeh R."/>
            <person name="Blakely D."/>
            <person name="Cook R."/>
            <person name="Gilbert K."/>
            <person name="Harrison D."/>
            <person name="Hoang L."/>
            <person name="Keagle P."/>
            <person name="Lumm W."/>
            <person name="Pothier B."/>
            <person name="Qiu D."/>
            <person name="Spadafora R."/>
            <person name="Vicare R."/>
            <person name="Wang Y."/>
            <person name="Wierzbowski J."/>
            <person name="Gibson R."/>
            <person name="Jiwani N."/>
            <person name="Caruso A."/>
            <person name="Bush D."/>
            <person name="Safer H."/>
            <person name="Patwell D."/>
            <person name="Prabhakar S."/>
            <person name="McDougall S."/>
            <person name="Shimer G."/>
            <person name="Goyal A."/>
            <person name="Pietrovski S."/>
            <person name="Church G.M."/>
            <person name="Daniels C.J."/>
            <person name="Mao J.-I."/>
            <person name="Rice P."/>
            <person name="Noelling J."/>
            <person name="Reeve J.N."/>
        </authorList>
    </citation>
    <scope>NUCLEOTIDE SEQUENCE [LARGE SCALE GENOMIC DNA]</scope>
    <source>
        <strain>ATCC 29096 / DSM 1053 / JCM 10044 / NBRC 100330 / Delta H</strain>
    </source>
</reference>
<reference key="2">
    <citation type="journal article" date="2002" name="J. Biol. Chem.">
        <title>Evolutionary divergence of the archaeal aspartyl-tRNA synthetases into discriminating and nondiscriminating forms.</title>
        <authorList>
            <person name="Tumbula-Hansen D."/>
            <person name="Feng L."/>
            <person name="Toogood H."/>
            <person name="Stetter K.O."/>
            <person name="Soll D."/>
        </authorList>
    </citation>
    <scope>FUNCTION AS A NON-DISCRIMINATING ASPRS</scope>
    <source>
        <strain>ATCC 29096 / DSM 1053 / JCM 10044 / NBRC 100330 / Delta H</strain>
    </source>
</reference>